<gene>
    <name evidence="3" type="primary">damt-1</name>
    <name evidence="5" type="ORF">C18A3.1</name>
</gene>
<sequence length="365" mass="42215">MDTEFAILDEEKYYDSVFKELNLKTRSELYEISSKFMPDSQFEAIKRRGISNRKRKIKETSENSNRMEQMALKIKNVGTELKIFKKKSILDNNLKSRKAAETALNVSIPSASASSEQIIEFQKSESLSNLMSNGMINNWVRCSGDKPGIIENSDGTKFYIPPKSTFHVGDVKDIEQYSRAHDLLFDLIIADPPWFSKSVKRKRTYQMDEEVLDCLDIPVILTHDALIAFWITNRIGIEEEMIERFDKWGMEVVATWKLLKITTQGDPVYDFDNQKHKVPFESLMLAKKKDSMRKFELPENFVFASVPMSVHSHKPPLLDLLRHFGIEFTEPLELFARSLLPSTHSVGYEPFLLQSEHVFTRNISL</sequence>
<protein>
    <recommendedName>
        <fullName evidence="4">DNA N6-methyl methyltransferase</fullName>
        <ecNumber evidence="2">2.1.1.72</ecNumber>
    </recommendedName>
    <alternativeName>
        <fullName evidence="3">DNA N6 adenine methyltransferase 1</fullName>
    </alternativeName>
</protein>
<evidence type="ECO:0000255" key="1">
    <source>
        <dbReference type="PROSITE-ProRule" id="PRU00489"/>
    </source>
</evidence>
<evidence type="ECO:0000269" key="2">
    <source>
    </source>
</evidence>
<evidence type="ECO:0000303" key="3">
    <source>
    </source>
</evidence>
<evidence type="ECO:0000305" key="4"/>
<evidence type="ECO:0000312" key="5">
    <source>
        <dbReference type="WormBase" id="C18A3.1"/>
    </source>
</evidence>
<comment type="function">
    <text evidence="2">Methylates DNA on the 6th position of adenine (N(6)-methyladenosine) (PubMed:25936839). N(6)-methyladenosine (m6A) DNA is involved in epigenetic transgenerational inheritance (PubMed:25936839).</text>
</comment>
<comment type="catalytic activity">
    <reaction evidence="2">
        <text>a 2'-deoxyadenosine in DNA + S-adenosyl-L-methionine = an N(6)-methyl-2'-deoxyadenosine in DNA + S-adenosyl-L-homocysteine + H(+)</text>
        <dbReference type="Rhea" id="RHEA:15197"/>
        <dbReference type="Rhea" id="RHEA-COMP:12418"/>
        <dbReference type="Rhea" id="RHEA-COMP:12419"/>
        <dbReference type="ChEBI" id="CHEBI:15378"/>
        <dbReference type="ChEBI" id="CHEBI:57856"/>
        <dbReference type="ChEBI" id="CHEBI:59789"/>
        <dbReference type="ChEBI" id="CHEBI:90615"/>
        <dbReference type="ChEBI" id="CHEBI:90616"/>
        <dbReference type="EC" id="2.1.1.72"/>
    </reaction>
</comment>
<comment type="similarity">
    <text evidence="1">Belongs to the MT-A70-like family.</text>
</comment>
<keyword id="KW-0489">Methyltransferase</keyword>
<keyword id="KW-1185">Reference proteome</keyword>
<keyword id="KW-0949">S-adenosyl-L-methionine</keyword>
<keyword id="KW-0808">Transferase</keyword>
<reference key="1">
    <citation type="journal article" date="1998" name="Science">
        <title>Genome sequence of the nematode C. elegans: a platform for investigating biology.</title>
        <authorList>
            <consortium name="The C. elegans sequencing consortium"/>
        </authorList>
    </citation>
    <scope>NUCLEOTIDE SEQUENCE [LARGE SCALE GENOMIC DNA]</scope>
    <source>
        <strain>Bristol N2</strain>
    </source>
</reference>
<reference key="2">
    <citation type="journal article" date="2015" name="Cell">
        <title>DNA Methylation on N(6)-Adenine in C. elegans.</title>
        <authorList>
            <person name="Greer E.L."/>
            <person name="Blanco M.A."/>
            <person name="Gu L."/>
            <person name="Sendinc E."/>
            <person name="Liu J."/>
            <person name="Aristizabal-Corrales D."/>
            <person name="Hsu C.H."/>
            <person name="Aravind L."/>
            <person name="He C."/>
            <person name="Shi Y."/>
        </authorList>
    </citation>
    <scope>FUNCTION</scope>
    <scope>CATALYTIC ACTIVITY</scope>
    <scope>MUTAGENESIS OF 191-ASP--TRP-194</scope>
</reference>
<proteinExistence type="evidence at protein level"/>
<name>DAMT1_CAEEL</name>
<accession>Q09956</accession>
<dbReference type="EC" id="2.1.1.72" evidence="2"/>
<dbReference type="EMBL" id="BX284602">
    <property type="protein sequence ID" value="CCD65009.1"/>
    <property type="molecule type" value="Genomic_DNA"/>
</dbReference>
<dbReference type="PIR" id="T15545">
    <property type="entry name" value="T15545"/>
</dbReference>
<dbReference type="RefSeq" id="NP_495127.1">
    <property type="nucleotide sequence ID" value="NM_062726.3"/>
</dbReference>
<dbReference type="SMR" id="Q09956"/>
<dbReference type="FunCoup" id="Q09956">
    <property type="interactions" value="7"/>
</dbReference>
<dbReference type="STRING" id="6239.C18A3.1.1"/>
<dbReference type="PaxDb" id="6239-C18A3.1"/>
<dbReference type="PeptideAtlas" id="Q09956"/>
<dbReference type="EnsemblMetazoa" id="C18A3.1.1">
    <property type="protein sequence ID" value="C18A3.1.1"/>
    <property type="gene ID" value="WBGene00015939"/>
</dbReference>
<dbReference type="GeneID" id="173970"/>
<dbReference type="KEGG" id="cel:CELE_C18A3.1"/>
<dbReference type="UCSC" id="C18A3.1">
    <property type="organism name" value="c. elegans"/>
</dbReference>
<dbReference type="AGR" id="WB:WBGene00015939"/>
<dbReference type="CTD" id="173970"/>
<dbReference type="WormBase" id="C18A3.1">
    <property type="protein sequence ID" value="CE01793"/>
    <property type="gene ID" value="WBGene00015939"/>
    <property type="gene designation" value="damt-1"/>
</dbReference>
<dbReference type="eggNOG" id="KOG2356">
    <property type="taxonomic scope" value="Eukaryota"/>
</dbReference>
<dbReference type="GeneTree" id="ENSGT00390000016237"/>
<dbReference type="HOGENOM" id="CLU_027091_0_1_1"/>
<dbReference type="InParanoid" id="Q09956"/>
<dbReference type="OMA" id="WRWLKVT"/>
<dbReference type="OrthoDB" id="61116at2759"/>
<dbReference type="PhylomeDB" id="Q09956"/>
<dbReference type="PRO" id="PR:Q09956"/>
<dbReference type="Proteomes" id="UP000001940">
    <property type="component" value="Chromosome II"/>
</dbReference>
<dbReference type="Bgee" id="WBGene00015939">
    <property type="expression patterns" value="Expressed in germ line (C elegans) and 4 other cell types or tissues"/>
</dbReference>
<dbReference type="GO" id="GO:0008168">
    <property type="term" value="F:methyltransferase activity"/>
    <property type="evidence" value="ECO:0000318"/>
    <property type="project" value="GO_Central"/>
</dbReference>
<dbReference type="GO" id="GO:0003676">
    <property type="term" value="F:nucleic acid binding"/>
    <property type="evidence" value="ECO:0007669"/>
    <property type="project" value="InterPro"/>
</dbReference>
<dbReference type="GO" id="GO:0009007">
    <property type="term" value="F:site-specific DNA-methyltransferase (adenine-specific) activity"/>
    <property type="evidence" value="ECO:0000314"/>
    <property type="project" value="UniProtKB"/>
</dbReference>
<dbReference type="GO" id="GO:0040029">
    <property type="term" value="P:epigenetic regulation of gene expression"/>
    <property type="evidence" value="ECO:0000315"/>
    <property type="project" value="UniProtKB"/>
</dbReference>
<dbReference type="GO" id="GO:0032259">
    <property type="term" value="P:methylation"/>
    <property type="evidence" value="ECO:0007669"/>
    <property type="project" value="UniProtKB-KW"/>
</dbReference>
<dbReference type="InterPro" id="IPR002052">
    <property type="entry name" value="DNA_methylase_N6_adenine_CS"/>
</dbReference>
<dbReference type="InterPro" id="IPR007757">
    <property type="entry name" value="MT-A70-like"/>
</dbReference>
<dbReference type="InterPro" id="IPR029063">
    <property type="entry name" value="SAM-dependent_MTases_sf"/>
</dbReference>
<dbReference type="PANTHER" id="PTHR12829:SF4">
    <property type="entry name" value="N(6)-ADENINE-SPECIFIC METHYLTRANSFERASE METTL4"/>
    <property type="match status" value="1"/>
</dbReference>
<dbReference type="PANTHER" id="PTHR12829">
    <property type="entry name" value="N6-ADENOSINE-METHYLTRANSFERASE"/>
    <property type="match status" value="1"/>
</dbReference>
<dbReference type="Pfam" id="PF05063">
    <property type="entry name" value="MT-A70"/>
    <property type="match status" value="1"/>
</dbReference>
<dbReference type="SUPFAM" id="SSF53335">
    <property type="entry name" value="S-adenosyl-L-methionine-dependent methyltransferases"/>
    <property type="match status" value="1"/>
</dbReference>
<dbReference type="PROSITE" id="PS51143">
    <property type="entry name" value="MT_A70"/>
    <property type="match status" value="1"/>
</dbReference>
<dbReference type="PROSITE" id="PS00092">
    <property type="entry name" value="N6_MTASE"/>
    <property type="match status" value="1"/>
</dbReference>
<organism>
    <name type="scientific">Caenorhabditis elegans</name>
    <dbReference type="NCBI Taxonomy" id="6239"/>
    <lineage>
        <taxon>Eukaryota</taxon>
        <taxon>Metazoa</taxon>
        <taxon>Ecdysozoa</taxon>
        <taxon>Nematoda</taxon>
        <taxon>Chromadorea</taxon>
        <taxon>Rhabditida</taxon>
        <taxon>Rhabditina</taxon>
        <taxon>Rhabditomorpha</taxon>
        <taxon>Rhabditoidea</taxon>
        <taxon>Rhabditidae</taxon>
        <taxon>Peloderinae</taxon>
        <taxon>Caenorhabditis</taxon>
    </lineage>
</organism>
<feature type="chain" id="PRO_0000433613" description="DNA N6-methyl methyltransferase">
    <location>
        <begin position="1"/>
        <end position="365"/>
    </location>
</feature>
<feature type="mutagenesis site" description="Abolishes m6A DNA methylation." evidence="2">
    <original>DPPW</original>
    <variation>APPA</variation>
    <location>
        <begin position="191"/>
        <end position="194"/>
    </location>
</feature>